<name>MYO1A_MOUSE</name>
<sequence length="1043" mass="118695">MPLLEGPVGVEDLILLEPLDEESLIKNLQLRYENKEIYTYIGNVVISMNPYEQLPIYGPEFIAKYRDYTFYELKPHIYALANVAYQSLKDRDRDQCILITGESGAGKTEASKLVMSYVAAVCGKGEQVNSVKEQLLQSNPVLEAFGNAKTIRNNNSSRFGKYMDIEFDFKGSPLGGVITNYLLEKSRVVKQLKGERNFHIFYQLLAGADAQLLKALKLEEDTSVYGYLNGEVSKVNGMDDASNFRAVQHAMSVIGFSEEEIRQVLEVTALVLKLGNVKLTDEFQANGIPASGICDGKGIQEIGEMMGLNSTELERALCSRTMETGKEKVVTVLNVTQAQYARDALAKNIYSRLFDWIVKRINESIKVGTGEKKKVMGVLDIYGFEILEDNSFEQFVINYCNERLQQVFIELTLKEEQEEYKREGIPWTKVEYFDNGIICNLIEHSQRGILAMLDEECLRPGVVSDSTFLAKLNQLFSKHSHYESKVSQNAQRQYDRTMGLSCFRISHYAGKVTYNVTGFIDKNNDLLFRDLSQTMWKAQHPLLKSLFPEGNPKEASLKRPPTAGTQFKNSVAVLMKNLYSKNPNYIRCIKPNDQQQKGRFTSEMVMVQARYLGLLENVRVRRAGYAFRQGYKPFLERYRLLSRSTWPRWNGDDREGVEKVLGSLTLSSEELAYGKTKIFIRSPKTLFYLEEQRRLRLQQLATLIQKVYRGWRCRTHYQQMRKSQILISAWFRGNKQKKHYGKIRSSVLLIQAFVRGWRARKNYRKYFRSGAALTLANFIYQSMAQKFLLNLKKNLPSTKVLDNTWPAAPYRCFNTANQELQRLFYQWKCKKFRDQLSPKQVQTLREKLCASELFKGKKASYPQSVPIPFRGDYIGLQGNPKLQRLKGREEGPVLVADTVKKVNRGNGKTSARILLLTKGHVILTDAKKSQAQIVIGLEDVAGVSVSSLQDGLFSLHLSEMSSAVSKGDILLVSDHVVELLTKMYQAVLDATQRQLSVTVTEKFSVRFKEGSVAVKVIQGPEGGGNRKLICKKKGSNAMEVTVR</sequence>
<organism>
    <name type="scientific">Mus musculus</name>
    <name type="common">Mouse</name>
    <dbReference type="NCBI Taxonomy" id="10090"/>
    <lineage>
        <taxon>Eukaryota</taxon>
        <taxon>Metazoa</taxon>
        <taxon>Chordata</taxon>
        <taxon>Craniata</taxon>
        <taxon>Vertebrata</taxon>
        <taxon>Euteleostomi</taxon>
        <taxon>Mammalia</taxon>
        <taxon>Eutheria</taxon>
        <taxon>Euarchontoglires</taxon>
        <taxon>Glires</taxon>
        <taxon>Rodentia</taxon>
        <taxon>Myomorpha</taxon>
        <taxon>Muroidea</taxon>
        <taxon>Muridae</taxon>
        <taxon>Murinae</taxon>
        <taxon>Mus</taxon>
        <taxon>Mus</taxon>
    </lineage>
</organism>
<comment type="function">
    <text evidence="7">Involved in directing the movement of organelles along actin filaments.</text>
</comment>
<comment type="PTM">
    <text evidence="2">Phosphorylated by ALPK1.</text>
</comment>
<comment type="similarity">
    <text evidence="7">Belongs to the TRAFAC class myosin-kinesin ATPase superfamily. Myosin family.</text>
</comment>
<comment type="caution">
    <text evidence="7">Represents an unconventional myosin. This protein should not be confused with the conventional myosin-1 (MYH1).</text>
</comment>
<feature type="chain" id="PRO_0000123439" description="Unconventional myosin-Ia">
    <location>
        <begin position="1"/>
        <end position="1043"/>
    </location>
</feature>
<feature type="domain" description="Myosin motor" evidence="5">
    <location>
        <begin position="8"/>
        <end position="694"/>
    </location>
</feature>
<feature type="domain" description="IQ 1" evidence="4">
    <location>
        <begin position="697"/>
        <end position="719"/>
    </location>
</feature>
<feature type="domain" description="IQ 2" evidence="4">
    <location>
        <begin position="720"/>
        <end position="742"/>
    </location>
</feature>
<feature type="domain" description="IQ 3" evidence="4">
    <location>
        <begin position="743"/>
        <end position="772"/>
    </location>
</feature>
<feature type="domain" description="TH1" evidence="6">
    <location>
        <begin position="858"/>
        <end position="1042"/>
    </location>
</feature>
<feature type="region of interest" description="Actin-binding" evidence="3">
    <location>
        <begin position="571"/>
        <end position="593"/>
    </location>
</feature>
<feature type="binding site" evidence="1">
    <location>
        <begin position="101"/>
        <end position="108"/>
    </location>
    <ligand>
        <name>ATP</name>
        <dbReference type="ChEBI" id="CHEBI:30616"/>
    </ligand>
</feature>
<feature type="sequence conflict" description="In Ref. 3; AAC28397." evidence="7" ref="3">
    <original>I</original>
    <variation>L</variation>
    <location>
        <position position="397"/>
    </location>
</feature>
<dbReference type="EMBL" id="AC160970">
    <property type="status" value="NOT_ANNOTATED_CDS"/>
    <property type="molecule type" value="Genomic_DNA"/>
</dbReference>
<dbReference type="EMBL" id="BC147605">
    <property type="protein sequence ID" value="AAI47606.1"/>
    <property type="molecule type" value="mRNA"/>
</dbReference>
<dbReference type="EMBL" id="BC147612">
    <property type="protein sequence ID" value="AAI47613.1"/>
    <property type="molecule type" value="mRNA"/>
</dbReference>
<dbReference type="EMBL" id="AF009960">
    <property type="protein sequence ID" value="AAC28397.1"/>
    <property type="molecule type" value="mRNA"/>
</dbReference>
<dbReference type="CCDS" id="CCDS36083.1"/>
<dbReference type="RefSeq" id="NP_001074688.1">
    <property type="nucleotide sequence ID" value="NM_001081219.2"/>
</dbReference>
<dbReference type="RefSeq" id="XP_006513922.1">
    <property type="nucleotide sequence ID" value="XM_006513859.4"/>
</dbReference>
<dbReference type="RefSeq" id="XP_006513923.1">
    <property type="nucleotide sequence ID" value="XM_006513860.5"/>
</dbReference>
<dbReference type="SMR" id="O88329"/>
<dbReference type="BioGRID" id="240656">
    <property type="interactions" value="1"/>
</dbReference>
<dbReference type="CORUM" id="O88329"/>
<dbReference type="FunCoup" id="O88329">
    <property type="interactions" value="25"/>
</dbReference>
<dbReference type="IntAct" id="O88329">
    <property type="interactions" value="1"/>
</dbReference>
<dbReference type="STRING" id="10090.ENSMUSP00000078540"/>
<dbReference type="GlyGen" id="O88329">
    <property type="glycosylation" value="2 sites, 1 N-linked glycan (1 site), 1 O-linked glycan (1 site)"/>
</dbReference>
<dbReference type="iPTMnet" id="O88329"/>
<dbReference type="PhosphoSitePlus" id="O88329"/>
<dbReference type="jPOST" id="O88329"/>
<dbReference type="PaxDb" id="10090-ENSMUSP00000078540"/>
<dbReference type="PeptideAtlas" id="O88329"/>
<dbReference type="ProteomicsDB" id="293604"/>
<dbReference type="Antibodypedia" id="28435">
    <property type="antibodies" value="93 antibodies from 23 providers"/>
</dbReference>
<dbReference type="Ensembl" id="ENSMUST00000079590.7">
    <property type="protein sequence ID" value="ENSMUSP00000078540.6"/>
    <property type="gene ID" value="ENSMUSG00000025401.10"/>
</dbReference>
<dbReference type="GeneID" id="432516"/>
<dbReference type="KEGG" id="mmu:432516"/>
<dbReference type="UCSC" id="uc007hkh.2">
    <property type="organism name" value="mouse"/>
</dbReference>
<dbReference type="AGR" id="MGI:107732"/>
<dbReference type="CTD" id="4640"/>
<dbReference type="MGI" id="MGI:107732">
    <property type="gene designation" value="Myo1a"/>
</dbReference>
<dbReference type="VEuPathDB" id="HostDB:ENSMUSG00000025401"/>
<dbReference type="eggNOG" id="KOG0164">
    <property type="taxonomic scope" value="Eukaryota"/>
</dbReference>
<dbReference type="GeneTree" id="ENSGT00940000160660"/>
<dbReference type="HOGENOM" id="CLU_000192_7_7_1"/>
<dbReference type="InParanoid" id="O88329"/>
<dbReference type="OMA" id="IKPNEYQ"/>
<dbReference type="OrthoDB" id="10055605at2759"/>
<dbReference type="PhylomeDB" id="O88329"/>
<dbReference type="TreeFam" id="TF312960"/>
<dbReference type="BioGRID-ORCS" id="432516">
    <property type="hits" value="4 hits in 81 CRISPR screens"/>
</dbReference>
<dbReference type="PRO" id="PR:O88329"/>
<dbReference type="Proteomes" id="UP000000589">
    <property type="component" value="Chromosome 10"/>
</dbReference>
<dbReference type="RNAct" id="O88329">
    <property type="molecule type" value="protein"/>
</dbReference>
<dbReference type="Bgee" id="ENSMUSG00000025401">
    <property type="expression patterns" value="Expressed in small intestine Peyer's patch and 63 other cell types or tissues"/>
</dbReference>
<dbReference type="GO" id="GO:0016324">
    <property type="term" value="C:apical plasma membrane"/>
    <property type="evidence" value="ECO:0000314"/>
    <property type="project" value="MGI"/>
</dbReference>
<dbReference type="GO" id="GO:0009925">
    <property type="term" value="C:basal plasma membrane"/>
    <property type="evidence" value="ECO:0000314"/>
    <property type="project" value="MGI"/>
</dbReference>
<dbReference type="GO" id="GO:0016323">
    <property type="term" value="C:basolateral plasma membrane"/>
    <property type="evidence" value="ECO:0000250"/>
    <property type="project" value="UniProtKB"/>
</dbReference>
<dbReference type="GO" id="GO:0005903">
    <property type="term" value="C:brush border"/>
    <property type="evidence" value="ECO:0000314"/>
    <property type="project" value="UniProtKB"/>
</dbReference>
<dbReference type="GO" id="GO:0030864">
    <property type="term" value="C:cortical actin cytoskeleton"/>
    <property type="evidence" value="ECO:0000250"/>
    <property type="project" value="UniProtKB"/>
</dbReference>
<dbReference type="GO" id="GO:0005737">
    <property type="term" value="C:cytoplasm"/>
    <property type="evidence" value="ECO:0000250"/>
    <property type="project" value="UniProtKB"/>
</dbReference>
<dbReference type="GO" id="GO:0031941">
    <property type="term" value="C:filamentous actin"/>
    <property type="evidence" value="ECO:0000250"/>
    <property type="project" value="UniProtKB"/>
</dbReference>
<dbReference type="GO" id="GO:0016328">
    <property type="term" value="C:lateral plasma membrane"/>
    <property type="evidence" value="ECO:0000314"/>
    <property type="project" value="MGI"/>
</dbReference>
<dbReference type="GO" id="GO:0005902">
    <property type="term" value="C:microvillus"/>
    <property type="evidence" value="ECO:0000314"/>
    <property type="project" value="MGI"/>
</dbReference>
<dbReference type="GO" id="GO:0016459">
    <property type="term" value="C:myosin complex"/>
    <property type="evidence" value="ECO:0007669"/>
    <property type="project" value="UniProtKB-KW"/>
</dbReference>
<dbReference type="GO" id="GO:0044853">
    <property type="term" value="C:plasma membrane raft"/>
    <property type="evidence" value="ECO:0000314"/>
    <property type="project" value="UniProtKB"/>
</dbReference>
<dbReference type="GO" id="GO:0051015">
    <property type="term" value="F:actin filament binding"/>
    <property type="evidence" value="ECO:0000314"/>
    <property type="project" value="UniProtKB"/>
</dbReference>
<dbReference type="GO" id="GO:0005524">
    <property type="term" value="F:ATP binding"/>
    <property type="evidence" value="ECO:0007669"/>
    <property type="project" value="UniProtKB-KW"/>
</dbReference>
<dbReference type="GO" id="GO:0005516">
    <property type="term" value="F:calmodulin binding"/>
    <property type="evidence" value="ECO:0007669"/>
    <property type="project" value="UniProtKB-KW"/>
</dbReference>
<dbReference type="GO" id="GO:0003774">
    <property type="term" value="F:cytoskeletal motor activity"/>
    <property type="evidence" value="ECO:0007669"/>
    <property type="project" value="InterPro"/>
</dbReference>
<dbReference type="GO" id="GO:0030030">
    <property type="term" value="P:cell projection organization"/>
    <property type="evidence" value="ECO:0000315"/>
    <property type="project" value="MGI"/>
</dbReference>
<dbReference type="GO" id="GO:0030033">
    <property type="term" value="P:microvillus assembly"/>
    <property type="evidence" value="ECO:0000315"/>
    <property type="project" value="MGI"/>
</dbReference>
<dbReference type="GO" id="GO:0007605">
    <property type="term" value="P:sensory perception of sound"/>
    <property type="evidence" value="ECO:0000250"/>
    <property type="project" value="UniProtKB"/>
</dbReference>
<dbReference type="GO" id="GO:0051648">
    <property type="term" value="P:vesicle localization"/>
    <property type="evidence" value="ECO:0000250"/>
    <property type="project" value="UniProtKB"/>
</dbReference>
<dbReference type="CDD" id="cd01378">
    <property type="entry name" value="MYSc_Myo1"/>
    <property type="match status" value="1"/>
</dbReference>
<dbReference type="FunFam" id="1.10.10.820:FF:000001">
    <property type="entry name" value="Myosin heavy chain"/>
    <property type="match status" value="1"/>
</dbReference>
<dbReference type="FunFam" id="1.20.58.530:FF:000004">
    <property type="entry name" value="Unconventional myosin ID"/>
    <property type="match status" value="1"/>
</dbReference>
<dbReference type="FunFam" id="1.20.5.190:FF:000043">
    <property type="entry name" value="unconventional myosin-Ia isoform X1"/>
    <property type="match status" value="1"/>
</dbReference>
<dbReference type="FunFam" id="1.20.120.720:FF:000004">
    <property type="entry name" value="unconventional myosin-Ib isoform X1"/>
    <property type="match status" value="1"/>
</dbReference>
<dbReference type="Gene3D" id="1.10.10.820">
    <property type="match status" value="1"/>
</dbReference>
<dbReference type="Gene3D" id="1.20.5.190">
    <property type="match status" value="1"/>
</dbReference>
<dbReference type="Gene3D" id="1.20.58.530">
    <property type="match status" value="1"/>
</dbReference>
<dbReference type="Gene3D" id="6.20.240.20">
    <property type="match status" value="1"/>
</dbReference>
<dbReference type="Gene3D" id="3.40.850.10">
    <property type="entry name" value="Kinesin motor domain"/>
    <property type="match status" value="1"/>
</dbReference>
<dbReference type="Gene3D" id="1.20.120.720">
    <property type="entry name" value="Myosin VI head, motor domain, U50 subdomain"/>
    <property type="match status" value="1"/>
</dbReference>
<dbReference type="InterPro" id="IPR000048">
    <property type="entry name" value="IQ_motif_EF-hand-BS"/>
</dbReference>
<dbReference type="InterPro" id="IPR036961">
    <property type="entry name" value="Kinesin_motor_dom_sf"/>
</dbReference>
<dbReference type="InterPro" id="IPR001609">
    <property type="entry name" value="Myosin_head_motor_dom-like"/>
</dbReference>
<dbReference type="InterPro" id="IPR010926">
    <property type="entry name" value="Myosin_TH1"/>
</dbReference>
<dbReference type="InterPro" id="IPR036072">
    <property type="entry name" value="MYSc_Myo1"/>
</dbReference>
<dbReference type="InterPro" id="IPR027417">
    <property type="entry name" value="P-loop_NTPase"/>
</dbReference>
<dbReference type="PANTHER" id="PTHR13140">
    <property type="entry name" value="MYOSIN"/>
    <property type="match status" value="1"/>
</dbReference>
<dbReference type="PANTHER" id="PTHR13140:SF291">
    <property type="entry name" value="UNCONVENTIONAL MYOSIN-IA"/>
    <property type="match status" value="1"/>
</dbReference>
<dbReference type="Pfam" id="PF00612">
    <property type="entry name" value="IQ"/>
    <property type="match status" value="2"/>
</dbReference>
<dbReference type="Pfam" id="PF00063">
    <property type="entry name" value="Myosin_head"/>
    <property type="match status" value="1"/>
</dbReference>
<dbReference type="Pfam" id="PF06017">
    <property type="entry name" value="Myosin_TH1"/>
    <property type="match status" value="1"/>
</dbReference>
<dbReference type="PRINTS" id="PR00193">
    <property type="entry name" value="MYOSINHEAVY"/>
</dbReference>
<dbReference type="SMART" id="SM00015">
    <property type="entry name" value="IQ"/>
    <property type="match status" value="3"/>
</dbReference>
<dbReference type="SMART" id="SM00242">
    <property type="entry name" value="MYSc"/>
    <property type="match status" value="1"/>
</dbReference>
<dbReference type="SUPFAM" id="SSF52540">
    <property type="entry name" value="P-loop containing nucleoside triphosphate hydrolases"/>
    <property type="match status" value="1"/>
</dbReference>
<dbReference type="PROSITE" id="PS50096">
    <property type="entry name" value="IQ"/>
    <property type="match status" value="2"/>
</dbReference>
<dbReference type="PROSITE" id="PS51456">
    <property type="entry name" value="MYOSIN_MOTOR"/>
    <property type="match status" value="1"/>
</dbReference>
<dbReference type="PROSITE" id="PS51757">
    <property type="entry name" value="TH1"/>
    <property type="match status" value="1"/>
</dbReference>
<reference key="1">
    <citation type="journal article" date="2009" name="PLoS Biol.">
        <title>Lineage-specific biology revealed by a finished genome assembly of the mouse.</title>
        <authorList>
            <person name="Church D.M."/>
            <person name="Goodstadt L."/>
            <person name="Hillier L.W."/>
            <person name="Zody M.C."/>
            <person name="Goldstein S."/>
            <person name="She X."/>
            <person name="Bult C.J."/>
            <person name="Agarwala R."/>
            <person name="Cherry J.L."/>
            <person name="DiCuccio M."/>
            <person name="Hlavina W."/>
            <person name="Kapustin Y."/>
            <person name="Meric P."/>
            <person name="Maglott D."/>
            <person name="Birtle Z."/>
            <person name="Marques A.C."/>
            <person name="Graves T."/>
            <person name="Zhou S."/>
            <person name="Teague B."/>
            <person name="Potamousis K."/>
            <person name="Churas C."/>
            <person name="Place M."/>
            <person name="Herschleb J."/>
            <person name="Runnheim R."/>
            <person name="Forrest D."/>
            <person name="Amos-Landgraf J."/>
            <person name="Schwartz D.C."/>
            <person name="Cheng Z."/>
            <person name="Lindblad-Toh K."/>
            <person name="Eichler E.E."/>
            <person name="Ponting C.P."/>
        </authorList>
    </citation>
    <scope>NUCLEOTIDE SEQUENCE [LARGE SCALE GENOMIC DNA]</scope>
    <source>
        <strain>C57BL/6J</strain>
    </source>
</reference>
<reference key="2">
    <citation type="journal article" date="2004" name="Genome Res.">
        <title>The status, quality, and expansion of the NIH full-length cDNA project: the Mammalian Gene Collection (MGC).</title>
        <authorList>
            <consortium name="The MGC Project Team"/>
        </authorList>
    </citation>
    <scope>NUCLEOTIDE SEQUENCE [LARGE SCALE MRNA]</scope>
    <source>
        <tissue>Testis</tissue>
    </source>
</reference>
<reference key="3">
    <citation type="journal article" date="1999" name="J. Exp. Zool.">
        <title>Cloning and characterization of mouse brush border myosin-I in adult and embryonic intestine.</title>
        <authorList>
            <person name="Skowron J.F."/>
            <person name="Mooseker M.S."/>
        </authorList>
    </citation>
    <scope>NUCLEOTIDE SEQUENCE [MRNA] OF 1-909</scope>
</reference>
<protein>
    <recommendedName>
        <fullName>Unconventional myosin-Ia</fullName>
    </recommendedName>
    <alternativeName>
        <fullName>Brush border myosin I</fullName>
        <shortName>BBM-I</shortName>
        <shortName>BBMI</shortName>
    </alternativeName>
    <alternativeName>
        <fullName>Myosin I heavy chain</fullName>
        <shortName>MIHC</shortName>
    </alternativeName>
</protein>
<keyword id="KW-0009">Actin-binding</keyword>
<keyword id="KW-0067">ATP-binding</keyword>
<keyword id="KW-0112">Calmodulin-binding</keyword>
<keyword id="KW-0505">Motor protein</keyword>
<keyword id="KW-0518">Myosin</keyword>
<keyword id="KW-0547">Nucleotide-binding</keyword>
<keyword id="KW-0597">Phosphoprotein</keyword>
<keyword id="KW-1185">Reference proteome</keyword>
<keyword id="KW-0677">Repeat</keyword>
<accession>O88329</accession>
<accession>B2RW65</accession>
<proteinExistence type="evidence at transcript level"/>
<evidence type="ECO:0000250" key="1"/>
<evidence type="ECO:0000250" key="2">
    <source>
        <dbReference type="UniProtKB" id="Q9UBC5"/>
    </source>
</evidence>
<evidence type="ECO:0000255" key="3"/>
<evidence type="ECO:0000255" key="4">
    <source>
        <dbReference type="PROSITE-ProRule" id="PRU00116"/>
    </source>
</evidence>
<evidence type="ECO:0000255" key="5">
    <source>
        <dbReference type="PROSITE-ProRule" id="PRU00782"/>
    </source>
</evidence>
<evidence type="ECO:0000255" key="6">
    <source>
        <dbReference type="PROSITE-ProRule" id="PRU01093"/>
    </source>
</evidence>
<evidence type="ECO:0000305" key="7"/>
<gene>
    <name type="primary">Myo1a</name>
    <name type="synonym">Bbmi</name>
    <name type="synonym">Myhl</name>
</gene>